<dbReference type="EMBL" id="CR861421">
    <property type="protein sequence ID" value="CAH93477.1"/>
    <property type="molecule type" value="mRNA"/>
</dbReference>
<dbReference type="SMR" id="Q5R439"/>
<dbReference type="FunCoup" id="Q5R439">
    <property type="interactions" value="2269"/>
</dbReference>
<dbReference type="STRING" id="9601.ENSPPYP00000014936"/>
<dbReference type="eggNOG" id="KOG2208">
    <property type="taxonomic scope" value="Eukaryota"/>
</dbReference>
<dbReference type="InParanoid" id="Q5R439"/>
<dbReference type="Proteomes" id="UP000001595">
    <property type="component" value="Unplaced"/>
</dbReference>
<dbReference type="GO" id="GO:0005737">
    <property type="term" value="C:cytoplasm"/>
    <property type="evidence" value="ECO:0007669"/>
    <property type="project" value="UniProtKB-SubCell"/>
</dbReference>
<dbReference type="GO" id="GO:0034364">
    <property type="term" value="C:high-density lipoprotein particle"/>
    <property type="evidence" value="ECO:0007669"/>
    <property type="project" value="UniProtKB-KW"/>
</dbReference>
<dbReference type="GO" id="GO:0005634">
    <property type="term" value="C:nucleus"/>
    <property type="evidence" value="ECO:0007669"/>
    <property type="project" value="UniProtKB-SubCell"/>
</dbReference>
<dbReference type="GO" id="GO:0003729">
    <property type="term" value="F:mRNA binding"/>
    <property type="evidence" value="ECO:0007669"/>
    <property type="project" value="TreeGrafter"/>
</dbReference>
<dbReference type="GO" id="GO:0008203">
    <property type="term" value="P:cholesterol metabolic process"/>
    <property type="evidence" value="ECO:0007669"/>
    <property type="project" value="UniProtKB-KW"/>
</dbReference>
<dbReference type="GO" id="GO:0006869">
    <property type="term" value="P:lipid transport"/>
    <property type="evidence" value="ECO:0007669"/>
    <property type="project" value="UniProtKB-KW"/>
</dbReference>
<dbReference type="CDD" id="cd22405">
    <property type="entry name" value="KH-I_Vigilin_rpt1"/>
    <property type="match status" value="1"/>
</dbReference>
<dbReference type="CDD" id="cd22413">
    <property type="entry name" value="KH-I_Vigilin_rpt10"/>
    <property type="match status" value="1"/>
</dbReference>
<dbReference type="CDD" id="cd22414">
    <property type="entry name" value="KH-I_Vigilin_rpt11"/>
    <property type="match status" value="1"/>
</dbReference>
<dbReference type="CDD" id="cd22415">
    <property type="entry name" value="KH-I_Vigilin_rpt12"/>
    <property type="match status" value="1"/>
</dbReference>
<dbReference type="CDD" id="cd22416">
    <property type="entry name" value="KH-I_Vigilin_rpt13"/>
    <property type="match status" value="1"/>
</dbReference>
<dbReference type="CDD" id="cd22417">
    <property type="entry name" value="KH-I_Vigilin_rpt14"/>
    <property type="match status" value="1"/>
</dbReference>
<dbReference type="CDD" id="cd22418">
    <property type="entry name" value="KH-I_Vigilin_rpt15"/>
    <property type="match status" value="1"/>
</dbReference>
<dbReference type="CDD" id="cd22406">
    <property type="entry name" value="KH-I_Vigilin_rpt2"/>
    <property type="match status" value="1"/>
</dbReference>
<dbReference type="CDD" id="cd22407">
    <property type="entry name" value="KH-I_Vigilin_rpt3"/>
    <property type="match status" value="1"/>
</dbReference>
<dbReference type="CDD" id="cd22408">
    <property type="entry name" value="KH-I_Vigilin_rpt4"/>
    <property type="match status" value="1"/>
</dbReference>
<dbReference type="CDD" id="cd22409">
    <property type="entry name" value="KH-I_Vigilin_rpt5"/>
    <property type="match status" value="1"/>
</dbReference>
<dbReference type="CDD" id="cd02394">
    <property type="entry name" value="KH-I_Vigilin_rpt6"/>
    <property type="match status" value="1"/>
</dbReference>
<dbReference type="CDD" id="cd22410">
    <property type="entry name" value="KH-I_Vigilin_rpt7"/>
    <property type="match status" value="1"/>
</dbReference>
<dbReference type="CDD" id="cd22411">
    <property type="entry name" value="KH-I_Vigilin_rpt8"/>
    <property type="match status" value="1"/>
</dbReference>
<dbReference type="CDD" id="cd22412">
    <property type="entry name" value="KH-I_Vigilin_rpt9"/>
    <property type="match status" value="1"/>
</dbReference>
<dbReference type="FunFam" id="3.30.1370.10:FF:000046">
    <property type="entry name" value="High density lipoprotein binding protein"/>
    <property type="match status" value="1"/>
</dbReference>
<dbReference type="FunFam" id="3.30.1370.10:FF:000057">
    <property type="entry name" value="High density lipoprotein binding protein"/>
    <property type="match status" value="1"/>
</dbReference>
<dbReference type="FunFam" id="3.30.1370.10:FF:000061">
    <property type="entry name" value="High density lipoprotein binding protein"/>
    <property type="match status" value="1"/>
</dbReference>
<dbReference type="FunFam" id="3.30.1370.10:FF:000067">
    <property type="entry name" value="High density lipoprotein binding protein"/>
    <property type="match status" value="1"/>
</dbReference>
<dbReference type="FunFam" id="3.30.1370.10:FF:000042">
    <property type="entry name" value="Vigilin isoform X1"/>
    <property type="match status" value="1"/>
</dbReference>
<dbReference type="FunFam" id="3.30.1370.10:FF:000018">
    <property type="entry name" value="vigilin isoform X1"/>
    <property type="match status" value="3"/>
</dbReference>
<dbReference type="FunFam" id="3.30.1370.10:FF:000033">
    <property type="entry name" value="vigilin isoform X1"/>
    <property type="match status" value="1"/>
</dbReference>
<dbReference type="FunFam" id="3.30.1370.10:FF:000039">
    <property type="entry name" value="vigilin isoform X1"/>
    <property type="match status" value="1"/>
</dbReference>
<dbReference type="FunFam" id="3.30.1370.10:FF:000041">
    <property type="entry name" value="vigilin isoform X1"/>
    <property type="match status" value="1"/>
</dbReference>
<dbReference type="FunFam" id="3.30.1370.10:FF:000050">
    <property type="entry name" value="vigilin isoform X1"/>
    <property type="match status" value="1"/>
</dbReference>
<dbReference type="FunFam" id="3.30.1370.10:FF:000062">
    <property type="entry name" value="vigilin isoform X1"/>
    <property type="match status" value="1"/>
</dbReference>
<dbReference type="Gene3D" id="3.30.1370.10">
    <property type="entry name" value="K Homology domain, type 1"/>
    <property type="match status" value="14"/>
</dbReference>
<dbReference type="InterPro" id="IPR004087">
    <property type="entry name" value="KH_dom"/>
</dbReference>
<dbReference type="InterPro" id="IPR004088">
    <property type="entry name" value="KH_dom_type_1"/>
</dbReference>
<dbReference type="InterPro" id="IPR036612">
    <property type="entry name" value="KH_dom_type_1_sf"/>
</dbReference>
<dbReference type="PANTHER" id="PTHR10627">
    <property type="entry name" value="SCP160"/>
    <property type="match status" value="1"/>
</dbReference>
<dbReference type="PANTHER" id="PTHR10627:SF34">
    <property type="entry name" value="VIGILIN"/>
    <property type="match status" value="1"/>
</dbReference>
<dbReference type="Pfam" id="PF00013">
    <property type="entry name" value="KH_1"/>
    <property type="match status" value="14"/>
</dbReference>
<dbReference type="Pfam" id="PF24668">
    <property type="entry name" value="KH_Vigilin"/>
    <property type="match status" value="1"/>
</dbReference>
<dbReference type="SMART" id="SM00322">
    <property type="entry name" value="KH"/>
    <property type="match status" value="14"/>
</dbReference>
<dbReference type="SUPFAM" id="SSF54791">
    <property type="entry name" value="Eukaryotic type KH-domain (KH-domain type I)"/>
    <property type="match status" value="12"/>
</dbReference>
<dbReference type="PROSITE" id="PS50084">
    <property type="entry name" value="KH_TYPE_1"/>
    <property type="match status" value="14"/>
</dbReference>
<accession>Q5R439</accession>
<proteinExistence type="evidence at transcript level"/>
<gene>
    <name type="primary">HDLBP</name>
</gene>
<feature type="initiator methionine" description="Removed" evidence="2">
    <location>
        <position position="1"/>
    </location>
</feature>
<feature type="chain" id="PRO_0000269566" description="Vigilin">
    <location>
        <begin position="2"/>
        <end position="1268"/>
    </location>
</feature>
<feature type="domain" description="KH 1" evidence="6">
    <location>
        <begin position="158"/>
        <end position="229"/>
    </location>
</feature>
<feature type="domain" description="KH 2" evidence="6">
    <location>
        <begin position="230"/>
        <end position="302"/>
    </location>
</feature>
<feature type="domain" description="KH 3" evidence="6">
    <location>
        <begin position="303"/>
        <end position="371"/>
    </location>
</feature>
<feature type="domain" description="KH 4" evidence="6">
    <location>
        <begin position="372"/>
        <end position="442"/>
    </location>
</feature>
<feature type="domain" description="KH 5" evidence="6">
    <location>
        <begin position="443"/>
        <end position="514"/>
    </location>
</feature>
<feature type="domain" description="KH 6" evidence="6">
    <location>
        <begin position="515"/>
        <end position="588"/>
    </location>
</feature>
<feature type="domain" description="KH 7" evidence="6">
    <location>
        <begin position="589"/>
        <end position="660"/>
    </location>
</feature>
<feature type="domain" description="KH 8" evidence="6">
    <location>
        <begin position="661"/>
        <end position="734"/>
    </location>
</feature>
<feature type="domain" description="KH 9" evidence="6">
    <location>
        <begin position="735"/>
        <end position="807"/>
    </location>
</feature>
<feature type="domain" description="KH 10" evidence="6">
    <location>
        <begin position="808"/>
        <end position="880"/>
    </location>
</feature>
<feature type="domain" description="KH 11" evidence="6">
    <location>
        <begin position="881"/>
        <end position="979"/>
    </location>
</feature>
<feature type="domain" description="KH 12" evidence="6">
    <location>
        <begin position="980"/>
        <end position="1059"/>
    </location>
</feature>
<feature type="domain" description="KH 13" evidence="6">
    <location>
        <begin position="1060"/>
        <end position="1134"/>
    </location>
</feature>
<feature type="domain" description="KH 14" evidence="6">
    <location>
        <begin position="1135"/>
        <end position="1209"/>
    </location>
</feature>
<feature type="region of interest" description="Disordered" evidence="7">
    <location>
        <begin position="910"/>
        <end position="947"/>
    </location>
</feature>
<feature type="region of interest" description="Disordered" evidence="7">
    <location>
        <begin position="1237"/>
        <end position="1268"/>
    </location>
</feature>
<feature type="compositionally biased region" description="Basic and acidic residues" evidence="7">
    <location>
        <begin position="932"/>
        <end position="947"/>
    </location>
</feature>
<feature type="compositionally biased region" description="Polar residues" evidence="7">
    <location>
        <begin position="1237"/>
        <end position="1249"/>
    </location>
</feature>
<feature type="modified residue" description="N-acetylserine" evidence="2">
    <location>
        <position position="2"/>
    </location>
</feature>
<feature type="modified residue" description="Phosphothreonine" evidence="2">
    <location>
        <position position="8"/>
    </location>
</feature>
<feature type="modified residue" description="Phosphoserine" evidence="2">
    <location>
        <position position="11"/>
    </location>
</feature>
<feature type="modified residue" description="Phosphoserine" evidence="2">
    <location>
        <position position="31"/>
    </location>
</feature>
<feature type="modified residue" description="Phosphoserine" evidence="4">
    <location>
        <position position="35"/>
    </location>
</feature>
<feature type="modified residue" description="Phosphothreonine" evidence="5">
    <location>
        <position position="295"/>
    </location>
</feature>
<feature type="modified residue" description="Phosphothreonine" evidence="5">
    <location>
        <position position="296"/>
    </location>
</feature>
<feature type="modified residue" description="Phosphoserine" evidence="2">
    <location>
        <position position="317"/>
    </location>
</feature>
<feature type="modified residue" description="Phosphotyrosine" evidence="2">
    <location>
        <position position="437"/>
    </location>
</feature>
<feature type="modified residue" description="Phosphoserine" evidence="4">
    <location>
        <position position="645"/>
    </location>
</feature>
<feature type="modified residue" description="N6-acetyllysine" evidence="3">
    <location>
        <position position="991"/>
    </location>
</feature>
<feature type="modified residue" description="Phosphoserine" evidence="2">
    <location>
        <position position="1247"/>
    </location>
</feature>
<feature type="modified residue" description="Phosphoserine" evidence="2">
    <location>
        <position position="1252"/>
    </location>
</feature>
<name>VIGLN_PONAB</name>
<keyword id="KW-0007">Acetylation</keyword>
<keyword id="KW-0153">Cholesterol metabolism</keyword>
<keyword id="KW-0963">Cytoplasm</keyword>
<keyword id="KW-0345">HDL</keyword>
<keyword id="KW-0443">Lipid metabolism</keyword>
<keyword id="KW-0445">Lipid transport</keyword>
<keyword id="KW-0539">Nucleus</keyword>
<keyword id="KW-0597">Phosphoprotein</keyword>
<keyword id="KW-1185">Reference proteome</keyword>
<keyword id="KW-0677">Repeat</keyword>
<keyword id="KW-0694">RNA-binding</keyword>
<keyword id="KW-0753">Steroid metabolism</keyword>
<keyword id="KW-1207">Sterol metabolism</keyword>
<keyword id="KW-0813">Transport</keyword>
<sequence>MSSVAVLTQESFAEHRSGLVPQQIKVATLNSEEESDPPTYKDAFPPLPEKAACLESAQEPAGAWGNKIRPIKASVITQVFHVPLEERKYKDMNQFGEGEQAKICLEIMQRTGAHLELSLAKDQGLSIMVSGKLDAVMKARKDIVARLQTQASATVAIPKEHHRFVIGKNGEKLQDLELKTATKIQIPRPDDPSNQIKITGTKEGIEKARHEVLLISAEQDERAVERLEVEKAFHPFIAGPYNRLVGEIMQETGTRINIPPPSVNRTEIVFTGEKEQLAQAVARIKKIYEEKKKKTTTIAVEVKKSQHKYVIGPKGNSLQEILERTGVSVEIPPSDSISETVILRGEPEKLGQALTEVYAKANSFTVSSVAAPSWLHRFIIGKKGQNLAKITQQMPKVHIEFTEGEDKITLEGPTEDVSVTQEHIEGMVKDLINRMDYVEINIDHKFHRHLIGKSGANINRIKDQYKVSVRIPPDSEKSNLIRIEGDPQGVQQAKRELLELASRMENERTKDLIIEQRFHRTIIGQKGERIREIRDKFPEVIINFPDPAQKSDIVQLRGPKNEVEKCTKYMQKMVADLVENSYSISVPIFKQFHKNIIGKGGANIKKIREESNTKIDLPAENSNSETIIITGKRANCEAARSRILSIQKDLANIAEVEVSIPAKLHNSLIGTKGRLIRSIMEECGGVHIHFPVEGSGSDTVVIRGPSSDVEKAKKQLLHLAEEKQTKSFTVDIRAKPEYHKFLIGKGGGKIRKVRDSTGARVIFPAAEDKDQDLITIIGKEDAVREAQKELEALIQNLDNVVEDSMLVDPKHHRHFVIRRGQVLREIAEEYGGVMVSFPRSGTQSDKVTLKGAKGCVEAAKKRIQEIIEDLEAQVTLECAIPQKFHRSVMGPKGSRIQQITRDFSVQIKFPDREENPVHSTEPAVQENGDEAGEGREAKDSDPGSPRRCDIIIISGRKEKCEAAKEALEALVPVTVEVEVPFDLHRYVIGQKGSGIRKMMDEFEVNIHVPAPELQSDIIAITGLAANLDRAKAGLLERVKELQAEQEDRALRSFKLSVTVDPKYHPKIIGRKGAVITQIRLEHDVNIQFPDKGDGNQPQDQITITGYEKNTEAARDAILRIVGELEQMVSEDVPLDHRVHARIIGARGKAIRKIMDEFKVDIRFPQSGAPDPNCVTVTGLPENVEEAIDHILNLEEEYLADVVDSEALQVYMKPPVHEEAKAPSRGFVVRDAPWAASSSEKAPDMSSSEEFPSFGAQVAPKTLPWGPKR</sequence>
<organism>
    <name type="scientific">Pongo abelii</name>
    <name type="common">Sumatran orangutan</name>
    <name type="synonym">Pongo pygmaeus abelii</name>
    <dbReference type="NCBI Taxonomy" id="9601"/>
    <lineage>
        <taxon>Eukaryota</taxon>
        <taxon>Metazoa</taxon>
        <taxon>Chordata</taxon>
        <taxon>Craniata</taxon>
        <taxon>Vertebrata</taxon>
        <taxon>Euteleostomi</taxon>
        <taxon>Mammalia</taxon>
        <taxon>Eutheria</taxon>
        <taxon>Euarchontoglires</taxon>
        <taxon>Primates</taxon>
        <taxon>Haplorrhini</taxon>
        <taxon>Catarrhini</taxon>
        <taxon>Hominidae</taxon>
        <taxon>Pongo</taxon>
    </lineage>
</organism>
<protein>
    <recommendedName>
        <fullName>Vigilin</fullName>
    </recommendedName>
    <alternativeName>
        <fullName>High density lipoprotein-binding protein</fullName>
        <shortName>HDL-binding protein</shortName>
    </alternativeName>
</protein>
<comment type="function">
    <text evidence="1">Appears to play a role in cell sterol metabolism. It may function to protect cells from over-accumulation of cholesterol (By similarity).</text>
</comment>
<comment type="subcellular location">
    <subcellularLocation>
        <location evidence="1">Cytoplasm</location>
    </subcellularLocation>
    <subcellularLocation>
        <location evidence="1">Nucleus</location>
    </subcellularLocation>
</comment>
<reference key="1">
    <citation type="submission" date="2004-11" db="EMBL/GenBank/DDBJ databases">
        <authorList>
            <consortium name="The German cDNA consortium"/>
        </authorList>
    </citation>
    <scope>NUCLEOTIDE SEQUENCE [LARGE SCALE MRNA]</scope>
    <source>
        <tissue>Brain cortex</tissue>
    </source>
</reference>
<evidence type="ECO:0000250" key="1"/>
<evidence type="ECO:0000250" key="2">
    <source>
        <dbReference type="UniProtKB" id="Q00341"/>
    </source>
</evidence>
<evidence type="ECO:0000250" key="3">
    <source>
        <dbReference type="UniProtKB" id="Q8VDJ3"/>
    </source>
</evidence>
<evidence type="ECO:0000250" key="4">
    <source>
        <dbReference type="UniProtKB" id="Q9Z1A6"/>
    </source>
</evidence>
<evidence type="ECO:0000255" key="5"/>
<evidence type="ECO:0000255" key="6">
    <source>
        <dbReference type="PROSITE-ProRule" id="PRU00117"/>
    </source>
</evidence>
<evidence type="ECO:0000256" key="7">
    <source>
        <dbReference type="SAM" id="MobiDB-lite"/>
    </source>
</evidence>